<proteinExistence type="inferred from homology"/>
<dbReference type="EC" id="2.1.1.177" evidence="1"/>
<dbReference type="EMBL" id="CP000444">
    <property type="protein sequence ID" value="ABI42056.1"/>
    <property type="molecule type" value="Genomic_DNA"/>
</dbReference>
<dbReference type="SMR" id="Q0HXU9"/>
<dbReference type="KEGG" id="shm:Shewmr7_1057"/>
<dbReference type="HOGENOM" id="CLU_100552_1_0_6"/>
<dbReference type="GO" id="GO:0005737">
    <property type="term" value="C:cytoplasm"/>
    <property type="evidence" value="ECO:0007669"/>
    <property type="project" value="UniProtKB-SubCell"/>
</dbReference>
<dbReference type="GO" id="GO:0070038">
    <property type="term" value="F:rRNA (pseudouridine-N3-)-methyltransferase activity"/>
    <property type="evidence" value="ECO:0007669"/>
    <property type="project" value="UniProtKB-UniRule"/>
</dbReference>
<dbReference type="CDD" id="cd18081">
    <property type="entry name" value="RlmH-like"/>
    <property type="match status" value="1"/>
</dbReference>
<dbReference type="Gene3D" id="3.40.1280.10">
    <property type="match status" value="1"/>
</dbReference>
<dbReference type="HAMAP" id="MF_00658">
    <property type="entry name" value="23SrRNA_methyltr_H"/>
    <property type="match status" value="1"/>
</dbReference>
<dbReference type="InterPro" id="IPR029028">
    <property type="entry name" value="Alpha/beta_knot_MTases"/>
</dbReference>
<dbReference type="InterPro" id="IPR003742">
    <property type="entry name" value="RlmH-like"/>
</dbReference>
<dbReference type="InterPro" id="IPR029026">
    <property type="entry name" value="tRNA_m1G_MTases_N"/>
</dbReference>
<dbReference type="NCBIfam" id="NF000984">
    <property type="entry name" value="PRK00103.1-1"/>
    <property type="match status" value="1"/>
</dbReference>
<dbReference type="NCBIfam" id="NF000986">
    <property type="entry name" value="PRK00103.1-4"/>
    <property type="match status" value="1"/>
</dbReference>
<dbReference type="NCBIfam" id="TIGR00246">
    <property type="entry name" value="tRNA_RlmH_YbeA"/>
    <property type="match status" value="1"/>
</dbReference>
<dbReference type="PANTHER" id="PTHR33603">
    <property type="entry name" value="METHYLTRANSFERASE"/>
    <property type="match status" value="1"/>
</dbReference>
<dbReference type="PANTHER" id="PTHR33603:SF1">
    <property type="entry name" value="RIBOSOMAL RNA LARGE SUBUNIT METHYLTRANSFERASE H"/>
    <property type="match status" value="1"/>
</dbReference>
<dbReference type="Pfam" id="PF02590">
    <property type="entry name" value="SPOUT_MTase"/>
    <property type="match status" value="1"/>
</dbReference>
<dbReference type="PIRSF" id="PIRSF004505">
    <property type="entry name" value="MT_bac"/>
    <property type="match status" value="1"/>
</dbReference>
<dbReference type="SUPFAM" id="SSF75217">
    <property type="entry name" value="alpha/beta knot"/>
    <property type="match status" value="1"/>
</dbReference>
<name>RLMH_SHESR</name>
<organism>
    <name type="scientific">Shewanella sp. (strain MR-7)</name>
    <dbReference type="NCBI Taxonomy" id="60481"/>
    <lineage>
        <taxon>Bacteria</taxon>
        <taxon>Pseudomonadati</taxon>
        <taxon>Pseudomonadota</taxon>
        <taxon>Gammaproteobacteria</taxon>
        <taxon>Alteromonadales</taxon>
        <taxon>Shewanellaceae</taxon>
        <taxon>Shewanella</taxon>
    </lineage>
</organism>
<reference key="1">
    <citation type="submission" date="2006-08" db="EMBL/GenBank/DDBJ databases">
        <title>Complete sequence of chromosome 1 of Shewanella sp. MR-7.</title>
        <authorList>
            <person name="Copeland A."/>
            <person name="Lucas S."/>
            <person name="Lapidus A."/>
            <person name="Barry K."/>
            <person name="Detter J.C."/>
            <person name="Glavina del Rio T."/>
            <person name="Hammon N."/>
            <person name="Israni S."/>
            <person name="Dalin E."/>
            <person name="Tice H."/>
            <person name="Pitluck S."/>
            <person name="Kiss H."/>
            <person name="Brettin T."/>
            <person name="Bruce D."/>
            <person name="Han C."/>
            <person name="Tapia R."/>
            <person name="Gilna P."/>
            <person name="Schmutz J."/>
            <person name="Larimer F."/>
            <person name="Land M."/>
            <person name="Hauser L."/>
            <person name="Kyrpides N."/>
            <person name="Mikhailova N."/>
            <person name="Nealson K."/>
            <person name="Konstantinidis K."/>
            <person name="Klappenbach J."/>
            <person name="Tiedje J."/>
            <person name="Richardson P."/>
        </authorList>
    </citation>
    <scope>NUCLEOTIDE SEQUENCE [LARGE SCALE GENOMIC DNA]</scope>
    <source>
        <strain>MR-7</strain>
    </source>
</reference>
<protein>
    <recommendedName>
        <fullName evidence="1">Ribosomal RNA large subunit methyltransferase H</fullName>
        <ecNumber evidence="1">2.1.1.177</ecNumber>
    </recommendedName>
    <alternativeName>
        <fullName evidence="1">23S rRNA (pseudouridine1915-N3)-methyltransferase</fullName>
    </alternativeName>
    <alternativeName>
        <fullName evidence="1">23S rRNA m3Psi1915 methyltransferase</fullName>
    </alternativeName>
    <alternativeName>
        <fullName evidence="1">rRNA (pseudouridine-N3-)-methyltransferase RlmH</fullName>
    </alternativeName>
</protein>
<feature type="chain" id="PRO_0000260607" description="Ribosomal RNA large subunit methyltransferase H">
    <location>
        <begin position="1"/>
        <end position="156"/>
    </location>
</feature>
<feature type="binding site" evidence="1">
    <location>
        <position position="73"/>
    </location>
    <ligand>
        <name>S-adenosyl-L-methionine</name>
        <dbReference type="ChEBI" id="CHEBI:59789"/>
    </ligand>
</feature>
<feature type="binding site" evidence="1">
    <location>
        <position position="104"/>
    </location>
    <ligand>
        <name>S-adenosyl-L-methionine</name>
        <dbReference type="ChEBI" id="CHEBI:59789"/>
    </ligand>
</feature>
<feature type="binding site" evidence="1">
    <location>
        <begin position="123"/>
        <end position="128"/>
    </location>
    <ligand>
        <name>S-adenosyl-L-methionine</name>
        <dbReference type="ChEBI" id="CHEBI:59789"/>
    </ligand>
</feature>
<comment type="function">
    <text evidence="1">Specifically methylates the pseudouridine at position 1915 (m3Psi1915) in 23S rRNA.</text>
</comment>
<comment type="catalytic activity">
    <reaction evidence="1">
        <text>pseudouridine(1915) in 23S rRNA + S-adenosyl-L-methionine = N(3)-methylpseudouridine(1915) in 23S rRNA + S-adenosyl-L-homocysteine + H(+)</text>
        <dbReference type="Rhea" id="RHEA:42752"/>
        <dbReference type="Rhea" id="RHEA-COMP:10221"/>
        <dbReference type="Rhea" id="RHEA-COMP:10222"/>
        <dbReference type="ChEBI" id="CHEBI:15378"/>
        <dbReference type="ChEBI" id="CHEBI:57856"/>
        <dbReference type="ChEBI" id="CHEBI:59789"/>
        <dbReference type="ChEBI" id="CHEBI:65314"/>
        <dbReference type="ChEBI" id="CHEBI:74486"/>
        <dbReference type="EC" id="2.1.1.177"/>
    </reaction>
</comment>
<comment type="subunit">
    <text evidence="1">Homodimer.</text>
</comment>
<comment type="subcellular location">
    <subcellularLocation>
        <location evidence="1">Cytoplasm</location>
    </subcellularLocation>
</comment>
<comment type="similarity">
    <text evidence="1">Belongs to the RNA methyltransferase RlmH family.</text>
</comment>
<sequence length="156" mass="17541">MKLQLIAVGTRMPDWVTRGFEEYQRRFPRDMALELIEIPAGKRGKNADIVRILQKEGEQMLAAIPKGNHIVTLDLPGKNWTTPELATAMNKWQLDGRDVSLLVGGPEGLAPACKEAAHQSWCLSALTLPHPLVRIVVAESLYRAWSVNNNHPYHRE</sequence>
<keyword id="KW-0963">Cytoplasm</keyword>
<keyword id="KW-0489">Methyltransferase</keyword>
<keyword id="KW-0698">rRNA processing</keyword>
<keyword id="KW-0949">S-adenosyl-L-methionine</keyword>
<keyword id="KW-0808">Transferase</keyword>
<gene>
    <name evidence="1" type="primary">rlmH</name>
    <name type="ordered locus">Shewmr7_1057</name>
</gene>
<evidence type="ECO:0000255" key="1">
    <source>
        <dbReference type="HAMAP-Rule" id="MF_00658"/>
    </source>
</evidence>
<accession>Q0HXU9</accession>